<evidence type="ECO:0000255" key="1">
    <source>
        <dbReference type="HAMAP-Rule" id="MF_00500"/>
    </source>
</evidence>
<evidence type="ECO:0000256" key="2">
    <source>
        <dbReference type="SAM" id="MobiDB-lite"/>
    </source>
</evidence>
<evidence type="ECO:0000305" key="3"/>
<dbReference type="EMBL" id="CP000542">
    <property type="protein sequence ID" value="ABM57531.1"/>
    <property type="molecule type" value="Genomic_DNA"/>
</dbReference>
<dbReference type="RefSeq" id="WP_011809538.1">
    <property type="nucleotide sequence ID" value="NC_008786.1"/>
</dbReference>
<dbReference type="SMR" id="A1WIS4"/>
<dbReference type="STRING" id="391735.Veis_1777"/>
<dbReference type="GeneID" id="76460379"/>
<dbReference type="KEGG" id="vei:Veis_1777"/>
<dbReference type="eggNOG" id="COG0268">
    <property type="taxonomic scope" value="Bacteria"/>
</dbReference>
<dbReference type="HOGENOM" id="CLU_160655_4_0_4"/>
<dbReference type="OrthoDB" id="9807974at2"/>
<dbReference type="Proteomes" id="UP000000374">
    <property type="component" value="Chromosome"/>
</dbReference>
<dbReference type="GO" id="GO:0005829">
    <property type="term" value="C:cytosol"/>
    <property type="evidence" value="ECO:0007669"/>
    <property type="project" value="TreeGrafter"/>
</dbReference>
<dbReference type="GO" id="GO:0015935">
    <property type="term" value="C:small ribosomal subunit"/>
    <property type="evidence" value="ECO:0007669"/>
    <property type="project" value="TreeGrafter"/>
</dbReference>
<dbReference type="GO" id="GO:0070181">
    <property type="term" value="F:small ribosomal subunit rRNA binding"/>
    <property type="evidence" value="ECO:0007669"/>
    <property type="project" value="TreeGrafter"/>
</dbReference>
<dbReference type="GO" id="GO:0003735">
    <property type="term" value="F:structural constituent of ribosome"/>
    <property type="evidence" value="ECO:0007669"/>
    <property type="project" value="InterPro"/>
</dbReference>
<dbReference type="GO" id="GO:0006412">
    <property type="term" value="P:translation"/>
    <property type="evidence" value="ECO:0007669"/>
    <property type="project" value="UniProtKB-UniRule"/>
</dbReference>
<dbReference type="FunFam" id="1.20.58.110:FF:000001">
    <property type="entry name" value="30S ribosomal protein S20"/>
    <property type="match status" value="1"/>
</dbReference>
<dbReference type="Gene3D" id="1.20.58.110">
    <property type="entry name" value="Ribosomal protein S20"/>
    <property type="match status" value="1"/>
</dbReference>
<dbReference type="HAMAP" id="MF_00500">
    <property type="entry name" value="Ribosomal_bS20"/>
    <property type="match status" value="1"/>
</dbReference>
<dbReference type="InterPro" id="IPR002583">
    <property type="entry name" value="Ribosomal_bS20"/>
</dbReference>
<dbReference type="InterPro" id="IPR036510">
    <property type="entry name" value="Ribosomal_bS20_sf"/>
</dbReference>
<dbReference type="NCBIfam" id="TIGR00029">
    <property type="entry name" value="S20"/>
    <property type="match status" value="1"/>
</dbReference>
<dbReference type="PANTHER" id="PTHR33398">
    <property type="entry name" value="30S RIBOSOMAL PROTEIN S20"/>
    <property type="match status" value="1"/>
</dbReference>
<dbReference type="PANTHER" id="PTHR33398:SF1">
    <property type="entry name" value="SMALL RIBOSOMAL SUBUNIT PROTEIN BS20C"/>
    <property type="match status" value="1"/>
</dbReference>
<dbReference type="Pfam" id="PF01649">
    <property type="entry name" value="Ribosomal_S20p"/>
    <property type="match status" value="1"/>
</dbReference>
<dbReference type="SUPFAM" id="SSF46992">
    <property type="entry name" value="Ribosomal protein S20"/>
    <property type="match status" value="1"/>
</dbReference>
<reference key="1">
    <citation type="submission" date="2006-12" db="EMBL/GenBank/DDBJ databases">
        <title>Complete sequence of chromosome 1 of Verminephrobacter eiseniae EF01-2.</title>
        <authorList>
            <person name="Copeland A."/>
            <person name="Lucas S."/>
            <person name="Lapidus A."/>
            <person name="Barry K."/>
            <person name="Detter J.C."/>
            <person name="Glavina del Rio T."/>
            <person name="Dalin E."/>
            <person name="Tice H."/>
            <person name="Pitluck S."/>
            <person name="Chertkov O."/>
            <person name="Brettin T."/>
            <person name="Bruce D."/>
            <person name="Han C."/>
            <person name="Tapia R."/>
            <person name="Gilna P."/>
            <person name="Schmutz J."/>
            <person name="Larimer F."/>
            <person name="Land M."/>
            <person name="Hauser L."/>
            <person name="Kyrpides N."/>
            <person name="Kim E."/>
            <person name="Stahl D."/>
            <person name="Richardson P."/>
        </authorList>
    </citation>
    <scope>NUCLEOTIDE SEQUENCE [LARGE SCALE GENOMIC DNA]</scope>
    <source>
        <strain>EF01-2</strain>
    </source>
</reference>
<keyword id="KW-1185">Reference proteome</keyword>
<keyword id="KW-0687">Ribonucleoprotein</keyword>
<keyword id="KW-0689">Ribosomal protein</keyword>
<keyword id="KW-0694">RNA-binding</keyword>
<keyword id="KW-0699">rRNA-binding</keyword>
<accession>A1WIS4</accession>
<proteinExistence type="inferred from homology"/>
<gene>
    <name evidence="1" type="primary">rpsT</name>
    <name type="ordered locus">Veis_1777</name>
</gene>
<comment type="function">
    <text evidence="1">Binds directly to 16S ribosomal RNA.</text>
</comment>
<comment type="similarity">
    <text evidence="1">Belongs to the bacterial ribosomal protein bS20 family.</text>
</comment>
<feature type="chain" id="PRO_1000014673" description="Small ribosomal subunit protein bS20">
    <location>
        <begin position="1"/>
        <end position="99"/>
    </location>
</feature>
<feature type="region of interest" description="Disordered" evidence="2">
    <location>
        <begin position="1"/>
        <end position="21"/>
    </location>
</feature>
<feature type="compositionally biased region" description="Basic residues" evidence="2">
    <location>
        <begin position="1"/>
        <end position="20"/>
    </location>
</feature>
<protein>
    <recommendedName>
        <fullName evidence="1">Small ribosomal subunit protein bS20</fullName>
    </recommendedName>
    <alternativeName>
        <fullName evidence="3">30S ribosomal protein S20</fullName>
    </alternativeName>
</protein>
<sequence>MASAKPKKKNPRLASGRKRVRQDIKINAANTSLRSKYRTAVKNVEKAVLAGDKTKATEQFAKMQAVVDTVADKGIFHKNKAARDKSRLSAKVKALALAA</sequence>
<name>RS20_VEREI</name>
<organism>
    <name type="scientific">Verminephrobacter eiseniae (strain EF01-2)</name>
    <dbReference type="NCBI Taxonomy" id="391735"/>
    <lineage>
        <taxon>Bacteria</taxon>
        <taxon>Pseudomonadati</taxon>
        <taxon>Pseudomonadota</taxon>
        <taxon>Betaproteobacteria</taxon>
        <taxon>Burkholderiales</taxon>
        <taxon>Comamonadaceae</taxon>
        <taxon>Verminephrobacter</taxon>
    </lineage>
</organism>